<feature type="chain" id="PRO_0000287211" description="Glutathione gamma-glutamylcysteinyltransferase 2">
    <location>
        <begin position="1"/>
        <end position="452"/>
    </location>
</feature>
<feature type="domain" description="Peptidase C83" evidence="2">
    <location>
        <begin position="1"/>
        <end position="220"/>
    </location>
</feature>
<feature type="coiled-coil region" evidence="1">
    <location>
        <begin position="287"/>
        <end position="315"/>
    </location>
</feature>
<proteinExistence type="evidence at transcript level"/>
<comment type="function">
    <text evidence="3 4 5">Involved in the synthesis of phytochelatins (PC) and homophytochelatins (hPC), the heavy-metal-binding peptides of plants.</text>
</comment>
<comment type="catalytic activity">
    <reaction evidence="2">
        <text>[Glu(-Cys)](n)-Gly + glutathione + H(+) = [Glu(-Cys)](n+1)-Gly + glycine</text>
        <dbReference type="Rhea" id="RHEA:17917"/>
        <dbReference type="Rhea" id="RHEA-COMP:12438"/>
        <dbReference type="Rhea" id="RHEA-COMP:12439"/>
        <dbReference type="ChEBI" id="CHEBI:15378"/>
        <dbReference type="ChEBI" id="CHEBI:57305"/>
        <dbReference type="ChEBI" id="CHEBI:57925"/>
        <dbReference type="ChEBI" id="CHEBI:131728"/>
        <dbReference type="EC" id="2.3.2.15"/>
    </reaction>
</comment>
<comment type="activity regulation">
    <text evidence="3">Requires cadmium for activity. Also activated in heterologous system by AsO(4)(3-) ions, but not by Cu(2+), Zn(2+), Mn(2+) or Ni(2+) ions.</text>
</comment>
<comment type="tissue specificity">
    <text evidence="3">Expressed in shoots, roots, leaves, stems and flowers.</text>
</comment>
<comment type="induction">
    <text>Not induced by cadmium or other heavy metal stress.</text>
</comment>
<comment type="miscellaneous">
    <text>Expression of PCS2 is too low to complement a PCS1-defective mutant.</text>
</comment>
<comment type="similarity">
    <text evidence="2">Belongs to the phytochelatin synthase family.</text>
</comment>
<dbReference type="EC" id="2.3.2.15"/>
<dbReference type="EMBL" id="AY044049">
    <property type="protein sequence ID" value="AAK94671.1"/>
    <property type="molecule type" value="mRNA"/>
</dbReference>
<dbReference type="EMBL" id="AC003027">
    <property type="protein sequence ID" value="AAD10671.1"/>
    <property type="molecule type" value="Genomic_DNA"/>
</dbReference>
<dbReference type="EMBL" id="CP002684">
    <property type="protein sequence ID" value="ANM60703.1"/>
    <property type="molecule type" value="Genomic_DNA"/>
</dbReference>
<dbReference type="EMBL" id="BT029214">
    <property type="protein sequence ID" value="ABJ17149.1"/>
    <property type="molecule type" value="mRNA"/>
</dbReference>
<dbReference type="PIR" id="G86170">
    <property type="entry name" value="G86170"/>
</dbReference>
<dbReference type="RefSeq" id="NP_171894.1">
    <property type="nucleotide sequence ID" value="NM_100279.5"/>
</dbReference>
<dbReference type="SMR" id="Q9ZWB7"/>
<dbReference type="STRING" id="3702.Q9ZWB7"/>
<dbReference type="MEROPS" id="C83.004"/>
<dbReference type="iPTMnet" id="Q9ZWB7"/>
<dbReference type="PaxDb" id="3702-AT1G03980.1"/>
<dbReference type="ProteomicsDB" id="236849"/>
<dbReference type="EnsemblPlants" id="AT1G03980.3">
    <property type="protein sequence ID" value="AT1G03980.3"/>
    <property type="gene ID" value="AT1G03980"/>
</dbReference>
<dbReference type="GeneID" id="839354"/>
<dbReference type="Gramene" id="AT1G03980.3">
    <property type="protein sequence ID" value="AT1G03980.3"/>
    <property type="gene ID" value="AT1G03980"/>
</dbReference>
<dbReference type="KEGG" id="ath:AT1G03980"/>
<dbReference type="Araport" id="AT1G03980"/>
<dbReference type="TAIR" id="AT1G03980">
    <property type="gene designation" value="PCS2"/>
</dbReference>
<dbReference type="eggNOG" id="KOG0632">
    <property type="taxonomic scope" value="Eukaryota"/>
</dbReference>
<dbReference type="HOGENOM" id="CLU_046059_0_0_1"/>
<dbReference type="InParanoid" id="Q9ZWB7"/>
<dbReference type="OrthoDB" id="448954at2759"/>
<dbReference type="PhylomeDB" id="Q9ZWB7"/>
<dbReference type="BioCyc" id="ARA:AT1G03980-MONOMER"/>
<dbReference type="PRO" id="PR:Q9ZWB7"/>
<dbReference type="Proteomes" id="UP000006548">
    <property type="component" value="Chromosome 1"/>
</dbReference>
<dbReference type="ExpressionAtlas" id="Q9ZWB7">
    <property type="expression patterns" value="baseline and differential"/>
</dbReference>
<dbReference type="GO" id="GO:0016756">
    <property type="term" value="F:glutathione gamma-glutamylcysteinyltransferase activity"/>
    <property type="evidence" value="ECO:0000314"/>
    <property type="project" value="TAIR"/>
</dbReference>
<dbReference type="GO" id="GO:0046872">
    <property type="term" value="F:metal ion binding"/>
    <property type="evidence" value="ECO:0007669"/>
    <property type="project" value="UniProtKB-KW"/>
</dbReference>
<dbReference type="GO" id="GO:0046938">
    <property type="term" value="P:phytochelatin biosynthetic process"/>
    <property type="evidence" value="ECO:0000314"/>
    <property type="project" value="TAIR"/>
</dbReference>
<dbReference type="GO" id="GO:0010038">
    <property type="term" value="P:response to metal ion"/>
    <property type="evidence" value="ECO:0007669"/>
    <property type="project" value="InterPro"/>
</dbReference>
<dbReference type="FunFam" id="3.90.70.30:FF:000001">
    <property type="entry name" value="Glutathione gamma-glutamylcysteinyltransferase 1"/>
    <property type="match status" value="1"/>
</dbReference>
<dbReference type="Gene3D" id="3.90.70.30">
    <property type="entry name" value="Phytochelatin synthase, N-terminal domain"/>
    <property type="match status" value="1"/>
</dbReference>
<dbReference type="InterPro" id="IPR038765">
    <property type="entry name" value="Papain-like_cys_pep_sf"/>
</dbReference>
<dbReference type="InterPro" id="IPR040409">
    <property type="entry name" value="PCS-like"/>
</dbReference>
<dbReference type="InterPro" id="IPR007719">
    <property type="entry name" value="PCS_N"/>
</dbReference>
<dbReference type="InterPro" id="IPR038156">
    <property type="entry name" value="PCS_N_sf"/>
</dbReference>
<dbReference type="InterPro" id="IPR015407">
    <property type="entry name" value="Phytochelatin_synthase_C"/>
</dbReference>
<dbReference type="PANTHER" id="PTHR33447">
    <property type="entry name" value="GLUTATHIONE GAMMA-GLUTAMYLCYSTEINYLTRANSFERASE"/>
    <property type="match status" value="1"/>
</dbReference>
<dbReference type="PANTHER" id="PTHR33447:SF22">
    <property type="entry name" value="GLUTATHIONE GAMMA-GLUTAMYLCYSTEINYLTRANSFERASE 2"/>
    <property type="match status" value="1"/>
</dbReference>
<dbReference type="Pfam" id="PF05023">
    <property type="entry name" value="Phytochelatin"/>
    <property type="match status" value="1"/>
</dbReference>
<dbReference type="Pfam" id="PF09328">
    <property type="entry name" value="Phytochelatin_C"/>
    <property type="match status" value="2"/>
</dbReference>
<dbReference type="SUPFAM" id="SSF54001">
    <property type="entry name" value="Cysteine proteinases"/>
    <property type="match status" value="1"/>
</dbReference>
<dbReference type="PROSITE" id="PS51443">
    <property type="entry name" value="PCS"/>
    <property type="match status" value="1"/>
</dbReference>
<keyword id="KW-0012">Acyltransferase</keyword>
<keyword id="KW-0104">Cadmium</keyword>
<keyword id="KW-0175">Coiled coil</keyword>
<keyword id="KW-0479">Metal-binding</keyword>
<keyword id="KW-1185">Reference proteome</keyword>
<keyword id="KW-0808">Transferase</keyword>
<organism>
    <name type="scientific">Arabidopsis thaliana</name>
    <name type="common">Mouse-ear cress</name>
    <dbReference type="NCBI Taxonomy" id="3702"/>
    <lineage>
        <taxon>Eukaryota</taxon>
        <taxon>Viridiplantae</taxon>
        <taxon>Streptophyta</taxon>
        <taxon>Embryophyta</taxon>
        <taxon>Tracheophyta</taxon>
        <taxon>Spermatophyta</taxon>
        <taxon>Magnoliopsida</taxon>
        <taxon>eudicotyledons</taxon>
        <taxon>Gunneridae</taxon>
        <taxon>Pentapetalae</taxon>
        <taxon>rosids</taxon>
        <taxon>malvids</taxon>
        <taxon>Brassicales</taxon>
        <taxon>Brassicaceae</taxon>
        <taxon>Camelineae</taxon>
        <taxon>Arabidopsis</taxon>
    </lineage>
</organism>
<name>PCS2_ARATH</name>
<evidence type="ECO:0000255" key="1"/>
<evidence type="ECO:0000255" key="2">
    <source>
        <dbReference type="PROSITE-ProRule" id="PRU00773"/>
    </source>
</evidence>
<evidence type="ECO:0000269" key="3">
    <source>
    </source>
</evidence>
<evidence type="ECO:0000269" key="4">
    <source>
    </source>
</evidence>
<evidence type="ECO:0000269" key="5">
    <source>
    </source>
</evidence>
<reference key="1">
    <citation type="journal article" date="2001" name="FEBS Lett.">
        <title>Arabidopsis thaliana expresses a second functional phytochelatin synthase.</title>
        <authorList>
            <person name="Cazale A.-C."/>
            <person name="Clemens S."/>
        </authorList>
    </citation>
    <scope>NUCLEOTIDE SEQUENCE [MRNA]</scope>
    <scope>FUNCTION</scope>
    <scope>ACTIVITY REGULATION</scope>
    <scope>LACK OF INDUCTION BY CADMIUM</scope>
    <scope>TISSUE SPECIFICITY</scope>
    <source>
        <strain>cv. Columbia</strain>
    </source>
</reference>
<reference key="2">
    <citation type="journal article" date="2000" name="Nature">
        <title>Sequence and analysis of chromosome 1 of the plant Arabidopsis thaliana.</title>
        <authorList>
            <person name="Theologis A."/>
            <person name="Ecker J.R."/>
            <person name="Palm C.J."/>
            <person name="Federspiel N.A."/>
            <person name="Kaul S."/>
            <person name="White O."/>
            <person name="Alonso J."/>
            <person name="Altafi H."/>
            <person name="Araujo R."/>
            <person name="Bowman C.L."/>
            <person name="Brooks S.Y."/>
            <person name="Buehler E."/>
            <person name="Chan A."/>
            <person name="Chao Q."/>
            <person name="Chen H."/>
            <person name="Cheuk R.F."/>
            <person name="Chin C.W."/>
            <person name="Chung M.K."/>
            <person name="Conn L."/>
            <person name="Conway A.B."/>
            <person name="Conway A.R."/>
            <person name="Creasy T.H."/>
            <person name="Dewar K."/>
            <person name="Dunn P."/>
            <person name="Etgu P."/>
            <person name="Feldblyum T.V."/>
            <person name="Feng J.-D."/>
            <person name="Fong B."/>
            <person name="Fujii C.Y."/>
            <person name="Gill J.E."/>
            <person name="Goldsmith A.D."/>
            <person name="Haas B."/>
            <person name="Hansen N.F."/>
            <person name="Hughes B."/>
            <person name="Huizar L."/>
            <person name="Hunter J.L."/>
            <person name="Jenkins J."/>
            <person name="Johnson-Hopson C."/>
            <person name="Khan S."/>
            <person name="Khaykin E."/>
            <person name="Kim C.J."/>
            <person name="Koo H.L."/>
            <person name="Kremenetskaia I."/>
            <person name="Kurtz D.B."/>
            <person name="Kwan A."/>
            <person name="Lam B."/>
            <person name="Langin-Hooper S."/>
            <person name="Lee A."/>
            <person name="Lee J.M."/>
            <person name="Lenz C.A."/>
            <person name="Li J.H."/>
            <person name="Li Y.-P."/>
            <person name="Lin X."/>
            <person name="Liu S.X."/>
            <person name="Liu Z.A."/>
            <person name="Luros J.S."/>
            <person name="Maiti R."/>
            <person name="Marziali A."/>
            <person name="Militscher J."/>
            <person name="Miranda M."/>
            <person name="Nguyen M."/>
            <person name="Nierman W.C."/>
            <person name="Osborne B.I."/>
            <person name="Pai G."/>
            <person name="Peterson J."/>
            <person name="Pham P.K."/>
            <person name="Rizzo M."/>
            <person name="Rooney T."/>
            <person name="Rowley D."/>
            <person name="Sakano H."/>
            <person name="Salzberg S.L."/>
            <person name="Schwartz J.R."/>
            <person name="Shinn P."/>
            <person name="Southwick A.M."/>
            <person name="Sun H."/>
            <person name="Tallon L.J."/>
            <person name="Tambunga G."/>
            <person name="Toriumi M.J."/>
            <person name="Town C.D."/>
            <person name="Utterback T."/>
            <person name="Van Aken S."/>
            <person name="Vaysberg M."/>
            <person name="Vysotskaia V.S."/>
            <person name="Walker M."/>
            <person name="Wu D."/>
            <person name="Yu G."/>
            <person name="Fraser C.M."/>
            <person name="Venter J.C."/>
            <person name="Davis R.W."/>
        </authorList>
    </citation>
    <scope>NUCLEOTIDE SEQUENCE [LARGE SCALE GENOMIC DNA]</scope>
    <source>
        <strain>cv. Columbia</strain>
    </source>
</reference>
<reference key="3">
    <citation type="journal article" date="2017" name="Plant J.">
        <title>Araport11: a complete reannotation of the Arabidopsis thaliana reference genome.</title>
        <authorList>
            <person name="Cheng C.Y."/>
            <person name="Krishnakumar V."/>
            <person name="Chan A.P."/>
            <person name="Thibaud-Nissen F."/>
            <person name="Schobel S."/>
            <person name="Town C.D."/>
        </authorList>
    </citation>
    <scope>GENOME REANNOTATION</scope>
    <source>
        <strain>cv. Columbia</strain>
    </source>
</reference>
<reference key="4">
    <citation type="submission" date="2006-10" db="EMBL/GenBank/DDBJ databases">
        <title>Arabidopsis ORF clones.</title>
        <authorList>
            <person name="Quinitio C."/>
            <person name="Chen H."/>
            <person name="Kim C.J."/>
            <person name="Shinn P."/>
            <person name="Ecker J.R."/>
        </authorList>
    </citation>
    <scope>NUCLEOTIDE SEQUENCE [LARGE SCALE MRNA]</scope>
    <source>
        <strain>cv. Columbia</strain>
    </source>
</reference>
<reference key="5">
    <citation type="journal article" date="2005" name="Mol. Cells">
        <title>Expression of Arabidopsis phytochelatin synthase 2 is too low to complement an AtPCS1-defective Cad1-3 mutant.</title>
        <authorList>
            <person name="Lee S."/>
            <person name="Kang B.S."/>
        </authorList>
    </citation>
    <scope>FUNCTION</scope>
</reference>
<reference key="6">
    <citation type="journal article" date="2007" name="Plant J.">
        <title>Function of phytochelatin synthase in catabolism of glutathione-conjugates.</title>
        <authorList>
            <person name="Blum R."/>
            <person name="Beck A."/>
            <person name="Korte A."/>
            <person name="Stengel A."/>
            <person name="Letzel T."/>
            <person name="Lendzian K."/>
            <person name="Grill E."/>
        </authorList>
    </citation>
    <scope>FUNCTION</scope>
</reference>
<sequence length="452" mass="51551">MSMASLYRRSLSPPAIDFASFEGKQIFNEALQKGTMEGFFGLISYFQTQSEPAFCGLASLSMVLNSLSIDPGRKWKGPWRWFDESMLECCEPLEIVKDKGISFGKVVCLAHSSGAKVEAFRTNQSTIDDFRKYVVKCSTSDNCHMISTYHRQVLKQTGTGHFSPIGGYNAERDMALILDVARFKYPPHWVPLKLLWDAMDSIDQSTGRRRGFMLISRPHREPGLLYTLSCKDESWISIAKYLKEDVPRLVSSQHVDTIERILYVVFKSLPANFNQFIKWMAEIRRTEDVNQNLSSEEKSRLKLKQELLKQVQETKLFKHVDKFLSSVYEDNLPYVAAKVYCDGDEILSGYESDESCCKETCVKCIKGLGEEKVTVVAYPSGNDVFTALLLALPPQTWSGIKDQSLLQEMKQLISMVSHPTLLQQEVLHLRRQLEMLKRCQENKEDEELSAPA</sequence>
<protein>
    <recommendedName>
        <fullName>Glutathione gamma-glutamylcysteinyltransferase 2</fullName>
        <ecNumber>2.3.2.15</ecNumber>
    </recommendedName>
    <alternativeName>
        <fullName>Phytochelatin synthase 2</fullName>
        <shortName>AtPCS2</shortName>
    </alternativeName>
</protein>
<gene>
    <name type="primary">PCS2</name>
    <name type="ordered locus">At1g03980</name>
    <name type="ORF">F21M11.9</name>
</gene>
<accession>Q9ZWB7</accession>